<reference key="1">
    <citation type="journal article" date="1994" name="Proc. Natl. Acad. Sci. U.S.A.">
        <title>An Escherichia coli homologue of eukaryotic potassium channel proteins.</title>
        <authorList>
            <person name="Milkman R."/>
        </authorList>
    </citation>
    <scope>NUCLEOTIDE SEQUENCE [GENOMIC DNA]</scope>
    <source>
        <strain>K12 / W3110 / ATCC 27325 / DSM 5911</strain>
    </source>
</reference>
<reference key="2">
    <citation type="journal article" date="1995" name="J. Bacteriol.">
        <title>Nucleotide sequence, mutational analysis, transcriptional start site, and product analysis of nov, the gene which affects Escherichia coli K-12 resistance to the gyrase inhibitor novobiocin.</title>
        <authorList>
            <person name="Ivanisevic R."/>
            <person name="Milic M."/>
            <person name="Ajdic D."/>
            <person name="Rakonjac J.V."/>
            <person name="Savic D.J."/>
        </authorList>
    </citation>
    <scope>NUCLEOTIDE SEQUENCE [GENOMIC DNA]</scope>
    <source>
        <strain>K12 / W3110 / ATCC 27325 / DSM 5911</strain>
    </source>
</reference>
<reference key="3">
    <citation type="submission" date="1994-11" db="EMBL/GenBank/DDBJ databases">
        <authorList>
            <person name="Shibuya I."/>
            <person name="Asami Y."/>
            <person name="Uetake N."/>
            <person name="Ohta A."/>
            <person name="Matsuzaki H."/>
            <person name="Matsumoto K."/>
        </authorList>
    </citation>
    <scope>NUCLEOTIDE SEQUENCE [GENOMIC DNA]</scope>
    <source>
        <strain>K12 / C600 / CR34 / ATCC 23724 / DSM 3925 / LMG 3041 / NCIB 10222</strain>
    </source>
</reference>
<reference key="4">
    <citation type="submission" date="1994-10" db="EMBL/GenBank/DDBJ databases">
        <authorList>
            <person name="Xia W."/>
            <person name="Dowhan W."/>
        </authorList>
    </citation>
    <scope>NUCLEOTIDE SEQUENCE [GENOMIC DNA]</scope>
    <source>
        <strain>K12</strain>
    </source>
</reference>
<reference key="5">
    <citation type="submission" date="1995-04" db="EMBL/GenBank/DDBJ databases">
        <authorList>
            <person name="Milkman R."/>
        </authorList>
    </citation>
    <scope>NUCLEOTIDE SEQUENCE [GENOMIC DNA]</scope>
    <source>
        <strain>K12</strain>
        <strain>Various ECOR strains</strain>
    </source>
</reference>
<reference key="6">
    <citation type="journal article" date="1996" name="DNA Res.">
        <title>A 570-kb DNA sequence of the Escherichia coli K-12 genome corresponding to the 28.0-40.1 min region on the linkage map.</title>
        <authorList>
            <person name="Aiba H."/>
            <person name="Baba T."/>
            <person name="Fujita K."/>
            <person name="Hayashi K."/>
            <person name="Inada T."/>
            <person name="Isono K."/>
            <person name="Itoh T."/>
            <person name="Kasai H."/>
            <person name="Kashimoto K."/>
            <person name="Kimura S."/>
            <person name="Kitakawa M."/>
            <person name="Kitagawa M."/>
            <person name="Makino K."/>
            <person name="Miki T."/>
            <person name="Mizobuchi K."/>
            <person name="Mori H."/>
            <person name="Mori T."/>
            <person name="Motomura K."/>
            <person name="Nakade S."/>
            <person name="Nakamura Y."/>
            <person name="Nashimoto H."/>
            <person name="Nishio Y."/>
            <person name="Oshima T."/>
            <person name="Saito N."/>
            <person name="Sampei G."/>
            <person name="Seki Y."/>
            <person name="Sivasundaram S."/>
            <person name="Tagami H."/>
            <person name="Takeda J."/>
            <person name="Takemoto K."/>
            <person name="Takeuchi Y."/>
            <person name="Wada C."/>
            <person name="Yamamoto Y."/>
            <person name="Horiuchi T."/>
        </authorList>
    </citation>
    <scope>NUCLEOTIDE SEQUENCE [LARGE SCALE GENOMIC DNA]</scope>
    <source>
        <strain>K12 / W3110 / ATCC 27325 / DSM 5911</strain>
    </source>
</reference>
<reference key="7">
    <citation type="journal article" date="1997" name="Science">
        <title>The complete genome sequence of Escherichia coli K-12.</title>
        <authorList>
            <person name="Blattner F.R."/>
            <person name="Plunkett G. III"/>
            <person name="Bloch C.A."/>
            <person name="Perna N.T."/>
            <person name="Burland V."/>
            <person name="Riley M."/>
            <person name="Collado-Vides J."/>
            <person name="Glasner J.D."/>
            <person name="Rode C.K."/>
            <person name="Mayhew G.F."/>
            <person name="Gregor J."/>
            <person name="Davis N.W."/>
            <person name="Kirkpatrick H.A."/>
            <person name="Goeden M.A."/>
            <person name="Rose D.J."/>
            <person name="Mau B."/>
            <person name="Shao Y."/>
        </authorList>
    </citation>
    <scope>NUCLEOTIDE SEQUENCE [LARGE SCALE GENOMIC DNA]</scope>
    <source>
        <strain>K12 / MG1655 / ATCC 47076</strain>
    </source>
</reference>
<reference key="8">
    <citation type="journal article" date="2006" name="Mol. Syst. Biol.">
        <title>Highly accurate genome sequences of Escherichia coli K-12 strains MG1655 and W3110.</title>
        <authorList>
            <person name="Hayashi K."/>
            <person name="Morooka N."/>
            <person name="Yamamoto Y."/>
            <person name="Fujita K."/>
            <person name="Isono K."/>
            <person name="Choi S."/>
            <person name="Ohtsubo E."/>
            <person name="Baba T."/>
            <person name="Wanner B.L."/>
            <person name="Mori H."/>
            <person name="Horiuchi T."/>
        </authorList>
    </citation>
    <scope>NUCLEOTIDE SEQUENCE [LARGE SCALE GENOMIC DNA]</scope>
    <source>
        <strain>K12 / W3110 / ATCC 27325 / DSM 5911</strain>
    </source>
</reference>
<reference key="9">
    <citation type="journal article" date="1995" name="J. Bacteriol.">
        <title>Identity of the Escherichia coli cls and nov genes.</title>
        <authorList>
            <person name="Tropp B.E."/>
            <person name="Ragolia L."/>
            <person name="Xia W."/>
            <person name="Dowhan W."/>
            <person name="Milkman R."/>
            <person name="Rudd K.E."/>
            <person name="Ivanisevic R."/>
            <person name="Savic D.J."/>
        </authorList>
    </citation>
    <scope>IDENTIFICATION OF CLS AS NOV</scope>
    <scope>DISRUPTION PHENOTYPE</scope>
</reference>
<reference key="10">
    <citation type="journal article" date="1991" name="J. Biochem.">
        <title>Amplification and substantial purification of cardiolipin synthase of Escherichia coli.</title>
        <authorList>
            <person name="Hiraoka S."/>
            <person name="Nukui K."/>
            <person name="Uetake N."/>
            <person name="Ohta A."/>
            <person name="Shibuya I."/>
        </authorList>
    </citation>
    <scope>FUNCTION</scope>
    <scope>CATALYTIC ACTIVITY</scope>
    <scope>BIOPHYSICOCHEMICAL PROPERTIES</scope>
    <scope>SUBCELLULAR LOCATION</scope>
    <source>
        <strain>K12</strain>
    </source>
</reference>
<reference key="11">
    <citation type="journal article" date="1997" name="Biochim. Biophys. Acta">
        <title>Cardiolipin synthase from Escherichia coli.</title>
        <authorList>
            <person name="Tropp B.E."/>
        </authorList>
    </citation>
    <scope>REVIEW</scope>
</reference>
<reference key="12">
    <citation type="journal article" date="2005" name="Science">
        <title>Global topology analysis of the Escherichia coli inner membrane proteome.</title>
        <authorList>
            <person name="Daley D.O."/>
            <person name="Rapp M."/>
            <person name="Granseth E."/>
            <person name="Melen K."/>
            <person name="Drew D."/>
            <person name="von Heijne G."/>
        </authorList>
    </citation>
    <scope>SUBCELLULAR LOCATION</scope>
    <source>
        <strain>K12 / MG1655 / ATCC 47076</strain>
    </source>
</reference>
<reference key="13">
    <citation type="journal article" date="2009" name="Biochim. Biophys. Acta">
        <title>E. coli cardiolipin synthase: function of N-terminal conserved residues.</title>
        <authorList>
            <person name="Quigley B.R."/>
            <person name="Tropp B.E."/>
        </authorList>
    </citation>
    <scope>SUBCELLULAR LOCATION</scope>
    <scope>MUTAGENESIS OF 2-THR--GLU-60; 7-LYS-VAL-8; 30-LYS--ARG-32 AND GLY-59</scope>
</reference>
<reference key="14">
    <citation type="journal article" date="2012" name="Proc. Natl. Acad. Sci. U.S.A.">
        <title>Discovery of a cardiolipin synthase utilizing phosphatidylethanolamine and phosphatidylglycerol as substrates.</title>
        <authorList>
            <person name="Tan B.K."/>
            <person name="Bogdanov M."/>
            <person name="Zhao J."/>
            <person name="Dowhan W."/>
            <person name="Raetz C.R."/>
            <person name="Guan Z."/>
        </authorList>
    </citation>
    <scope>FUNCTION</scope>
    <scope>DISRUPTION PHENOTYPE</scope>
    <scope>GENE NAME</scope>
</reference>
<sequence length="486" mass="54822">MTTVYTLVSWLAILGYWLLIAGVTLRILMKRRAVPSAMAWLLIIYILPLVGIIAYLAVGELHLGKRRAERARAMWPSTAKWLNDLKACKHIFAEENSSVAAPLFKLCERRQGIAGVKGNQLQLMTESDDVMQALIRDIQLARHNIEMVFYIWQPGGMADQVAESLMAAARRGIHCRLMLDSAGSVAFFRSPWPELMRNAGIEVVEALKVNLMRVFLRRMDLRQHRKMIMIDNYIAYTGSMNMVDPRYFKQDAGVGQWIDLMARMEGPIATAMGIIYSCDWEIETGKRILPPPPDVNIMPFEQASGHTIHTIASGPGFPEDLIHQALLTAAYSAREYLIMTTPYFVPSDDLLHAICTAAQRGVDVSIILPRKNDSMLVGWASRAFFTELLAAGVKIYQFEGGLLHTKSVLVDGELSLVGTVNLDMRSLWLNFEITLAIDDKGFGADLAAVQDDYISRSRLLDARLWLKRPLWQRVAERLFYFFSPLL</sequence>
<protein>
    <recommendedName>
        <fullName evidence="1">Cardiolipin synthase A</fullName>
        <shortName evidence="1">CL synthase</shortName>
        <ecNumber evidence="1 3">2.7.8.-</ecNumber>
    </recommendedName>
</protein>
<keyword id="KW-0997">Cell inner membrane</keyword>
<keyword id="KW-1003">Cell membrane</keyword>
<keyword id="KW-0444">Lipid biosynthesis</keyword>
<keyword id="KW-0443">Lipid metabolism</keyword>
<keyword id="KW-0472">Membrane</keyword>
<keyword id="KW-0594">Phospholipid biosynthesis</keyword>
<keyword id="KW-1208">Phospholipid metabolism</keyword>
<keyword id="KW-1185">Reference proteome</keyword>
<keyword id="KW-0677">Repeat</keyword>
<keyword id="KW-0808">Transferase</keyword>
<keyword id="KW-0812">Transmembrane</keyword>
<keyword id="KW-1133">Transmembrane helix</keyword>
<name>CLSA_ECOLI</name>
<proteinExistence type="evidence at protein level"/>
<gene>
    <name evidence="1 7" type="primary">clsA</name>
    <name type="synonym">cls</name>
    <name type="synonym">nov</name>
    <name type="synonym">yciJ</name>
    <name type="ordered locus">b1249</name>
    <name type="ordered locus">JW1241</name>
</gene>
<accession>P0A6H8</accession>
<accession>P31071</accession>
<accession>P94720</accession>
<accession>P94730</accession>
<accession>P94733</accession>
<accession>P94740</accession>
<dbReference type="EC" id="2.7.8.-" evidence="1 3"/>
<dbReference type="EMBL" id="L12044">
    <property type="protein sequence ID" value="AAA66948.1"/>
    <property type="molecule type" value="Genomic_DNA"/>
</dbReference>
<dbReference type="EMBL" id="U01911">
    <property type="protein sequence ID" value="AAA82872.1"/>
    <property type="molecule type" value="Genomic_DNA"/>
</dbReference>
<dbReference type="EMBL" id="D38779">
    <property type="protein sequence ID" value="BAA07636.1"/>
    <property type="molecule type" value="Genomic_DNA"/>
</dbReference>
<dbReference type="EMBL" id="U15986">
    <property type="protein sequence ID" value="AAA53368.1"/>
    <property type="molecule type" value="Genomic_DNA"/>
</dbReference>
<dbReference type="EMBL" id="U24206">
    <property type="protein sequence ID" value="AAB60160.1"/>
    <property type="molecule type" value="Genomic_DNA"/>
</dbReference>
<dbReference type="EMBL" id="U24195">
    <property type="protein sequence ID" value="AAB60072.1"/>
    <property type="molecule type" value="Genomic_DNA"/>
</dbReference>
<dbReference type="EMBL" id="U24196">
    <property type="protein sequence ID" value="AAB60080.1"/>
    <property type="molecule type" value="Genomic_DNA"/>
</dbReference>
<dbReference type="EMBL" id="U24197">
    <property type="protein sequence ID" value="AAB60088.1"/>
    <property type="molecule type" value="Genomic_DNA"/>
</dbReference>
<dbReference type="EMBL" id="U24198">
    <property type="protein sequence ID" value="AAB60096.1"/>
    <property type="molecule type" value="Genomic_DNA"/>
</dbReference>
<dbReference type="EMBL" id="U24199">
    <property type="protein sequence ID" value="AAB60104.1"/>
    <property type="molecule type" value="Genomic_DNA"/>
</dbReference>
<dbReference type="EMBL" id="U24200">
    <property type="protein sequence ID" value="AAB60112.1"/>
    <property type="molecule type" value="Genomic_DNA"/>
</dbReference>
<dbReference type="EMBL" id="U24201">
    <property type="protein sequence ID" value="AAB60120.1"/>
    <property type="molecule type" value="Genomic_DNA"/>
</dbReference>
<dbReference type="EMBL" id="U24202">
    <property type="protein sequence ID" value="AAB60128.1"/>
    <property type="molecule type" value="Genomic_DNA"/>
</dbReference>
<dbReference type="EMBL" id="U24203">
    <property type="protein sequence ID" value="AAB60136.1"/>
    <property type="molecule type" value="Genomic_DNA"/>
</dbReference>
<dbReference type="EMBL" id="U24204">
    <property type="protein sequence ID" value="AAB60144.1"/>
    <property type="molecule type" value="Genomic_DNA"/>
</dbReference>
<dbReference type="EMBL" id="U24205">
    <property type="protein sequence ID" value="AAB60152.1"/>
    <property type="molecule type" value="Genomic_DNA"/>
</dbReference>
<dbReference type="EMBL" id="U00096">
    <property type="protein sequence ID" value="AAC74331.1"/>
    <property type="molecule type" value="Genomic_DNA"/>
</dbReference>
<dbReference type="EMBL" id="AP009048">
    <property type="protein sequence ID" value="BAA14781.1"/>
    <property type="molecule type" value="Genomic_DNA"/>
</dbReference>
<dbReference type="PIR" id="A56145">
    <property type="entry name" value="A56145"/>
</dbReference>
<dbReference type="RefSeq" id="NP_415765.1">
    <property type="nucleotide sequence ID" value="NC_000913.3"/>
</dbReference>
<dbReference type="RefSeq" id="WP_000214516.1">
    <property type="nucleotide sequence ID" value="NZ_STEB01000005.1"/>
</dbReference>
<dbReference type="SMR" id="P0A6H8"/>
<dbReference type="BioGRID" id="4260112">
    <property type="interactions" value="332"/>
</dbReference>
<dbReference type="FunCoup" id="P0A6H8">
    <property type="interactions" value="177"/>
</dbReference>
<dbReference type="STRING" id="511145.b1249"/>
<dbReference type="jPOST" id="P0A6H8"/>
<dbReference type="PaxDb" id="511145-b1249"/>
<dbReference type="EnsemblBacteria" id="AAC74331">
    <property type="protein sequence ID" value="AAC74331"/>
    <property type="gene ID" value="b1249"/>
</dbReference>
<dbReference type="GeneID" id="93775314"/>
<dbReference type="GeneID" id="945821"/>
<dbReference type="KEGG" id="ecj:JW1241"/>
<dbReference type="KEGG" id="eco:b1249"/>
<dbReference type="KEGG" id="ecoc:C3026_07335"/>
<dbReference type="PATRIC" id="fig|1411691.4.peg.1034"/>
<dbReference type="EchoBASE" id="EB1565"/>
<dbReference type="eggNOG" id="COG1502">
    <property type="taxonomic scope" value="Bacteria"/>
</dbReference>
<dbReference type="HOGENOM" id="CLU_038053_1_0_6"/>
<dbReference type="InParanoid" id="P0A6H8"/>
<dbReference type="OMA" id="WLNFEVT"/>
<dbReference type="OrthoDB" id="9814092at2"/>
<dbReference type="PhylomeDB" id="P0A6H8"/>
<dbReference type="BioCyc" id="EcoCyc:CARDIOLIPSYN-MONOMER"/>
<dbReference type="BioCyc" id="MetaCyc:CARDIOLIPSYN-MONOMER"/>
<dbReference type="BRENDA" id="2.7.8.B10">
    <property type="organism ID" value="2026"/>
</dbReference>
<dbReference type="PRO" id="PR:P0A6H8"/>
<dbReference type="Proteomes" id="UP000000625">
    <property type="component" value="Chromosome"/>
</dbReference>
<dbReference type="GO" id="GO:0060187">
    <property type="term" value="C:cell pole"/>
    <property type="evidence" value="ECO:0000314"/>
    <property type="project" value="EcoCyc"/>
</dbReference>
<dbReference type="GO" id="GO:0016020">
    <property type="term" value="C:membrane"/>
    <property type="evidence" value="ECO:0000314"/>
    <property type="project" value="EcoCyc"/>
</dbReference>
<dbReference type="GO" id="GO:0005886">
    <property type="term" value="C:plasma membrane"/>
    <property type="evidence" value="ECO:0007669"/>
    <property type="project" value="UniProtKB-SubCell"/>
</dbReference>
<dbReference type="GO" id="GO:0008808">
    <property type="term" value="F:cardiolipin synthase activity"/>
    <property type="evidence" value="ECO:0000314"/>
    <property type="project" value="EcoCyc"/>
</dbReference>
<dbReference type="GO" id="GO:0032049">
    <property type="term" value="P:cardiolipin biosynthetic process"/>
    <property type="evidence" value="ECO:0000315"/>
    <property type="project" value="EcoCyc"/>
</dbReference>
<dbReference type="CDD" id="cd09152">
    <property type="entry name" value="PLDc_EcCLS_like_1"/>
    <property type="match status" value="1"/>
</dbReference>
<dbReference type="CDD" id="cd09158">
    <property type="entry name" value="PLDc_EcCLS_like_2"/>
    <property type="match status" value="1"/>
</dbReference>
<dbReference type="FunFam" id="3.30.870.10:FF:000002">
    <property type="entry name" value="Cardiolipin synthase A"/>
    <property type="match status" value="1"/>
</dbReference>
<dbReference type="FunFam" id="3.30.870.10:FF:000003">
    <property type="entry name" value="Cardiolipin synthase A"/>
    <property type="match status" value="1"/>
</dbReference>
<dbReference type="Gene3D" id="3.30.870.10">
    <property type="entry name" value="Endonuclease Chain A"/>
    <property type="match status" value="2"/>
</dbReference>
<dbReference type="HAMAP" id="MF_00190">
    <property type="entry name" value="Cardiolipin_synth_ClsA"/>
    <property type="match status" value="1"/>
</dbReference>
<dbReference type="InterPro" id="IPR022924">
    <property type="entry name" value="Cardiolipin_synthase"/>
</dbReference>
<dbReference type="InterPro" id="IPR030840">
    <property type="entry name" value="CL_synthase_A"/>
</dbReference>
<dbReference type="InterPro" id="IPR027379">
    <property type="entry name" value="CLS_N"/>
</dbReference>
<dbReference type="InterPro" id="IPR025202">
    <property type="entry name" value="PLD-like_dom"/>
</dbReference>
<dbReference type="InterPro" id="IPR001736">
    <property type="entry name" value="PLipase_D/transphosphatidylase"/>
</dbReference>
<dbReference type="NCBIfam" id="TIGR04265">
    <property type="entry name" value="bac_cardiolipin"/>
    <property type="match status" value="1"/>
</dbReference>
<dbReference type="PANTHER" id="PTHR21248">
    <property type="entry name" value="CARDIOLIPIN SYNTHASE"/>
    <property type="match status" value="1"/>
</dbReference>
<dbReference type="PANTHER" id="PTHR21248:SF22">
    <property type="entry name" value="PHOSPHOLIPASE D"/>
    <property type="match status" value="1"/>
</dbReference>
<dbReference type="Pfam" id="PF13091">
    <property type="entry name" value="PLDc_2"/>
    <property type="match status" value="2"/>
</dbReference>
<dbReference type="Pfam" id="PF13396">
    <property type="entry name" value="PLDc_N"/>
    <property type="match status" value="1"/>
</dbReference>
<dbReference type="SMART" id="SM00155">
    <property type="entry name" value="PLDc"/>
    <property type="match status" value="2"/>
</dbReference>
<dbReference type="SUPFAM" id="SSF56024">
    <property type="entry name" value="Phospholipase D/nuclease"/>
    <property type="match status" value="2"/>
</dbReference>
<dbReference type="PROSITE" id="PS50035">
    <property type="entry name" value="PLD"/>
    <property type="match status" value="2"/>
</dbReference>
<comment type="function">
    <text evidence="1 3 5">Catalyzes the reversible phosphatidyl group transfer from one phosphatidylglycerol molecule to another to form cardiolipin (CL) (diphosphatidylglycerol) and glycerol.</text>
</comment>
<comment type="catalytic activity">
    <reaction evidence="1 3">
        <text>2 a 1,2-diacyl-sn-glycero-3-phospho-(1'-sn-glycerol) = a cardiolipin + glycerol</text>
        <dbReference type="Rhea" id="RHEA:31451"/>
        <dbReference type="ChEBI" id="CHEBI:17754"/>
        <dbReference type="ChEBI" id="CHEBI:62237"/>
        <dbReference type="ChEBI" id="CHEBI:64716"/>
    </reaction>
</comment>
<comment type="biophysicochemical properties">
    <phDependence>
        <text evidence="3">Optimum pH is 7.0.</text>
    </phDependence>
</comment>
<comment type="subcellular location">
    <subcellularLocation>
        <location evidence="1 2 3 4">Cell inner membrane</location>
        <topology evidence="1 2 3">Multi-pass membrane protein</topology>
    </subcellularLocation>
</comment>
<comment type="PTM">
    <text>Seems to be post-translationally processed from a 53-55 kDa form to a 45-46 kDa form (PubMed:19341704, PubMed:7665497).</text>
</comment>
<comment type="disruption phenotype">
    <text evidence="5 6">Mutants have increased sensitivity to novobiocin. Triple deletion of clsA, clsB and clsC results in a complete lack of cardiolipin, regardless of growth phase or growth conditions.</text>
</comment>
<comment type="miscellaneous">
    <text evidence="8">All three cardiolipin synthases (ClsA, ClsB and ClsC) contribute to CL synthesis in stationary phase. Only ClsA contributes to synthesis during logarithmic growth phase.</text>
</comment>
<comment type="similarity">
    <text evidence="1">Belongs to the phospholipase D family. Cardiolipin synthase subfamily. ClsA sub-subfamily.</text>
</comment>
<organism>
    <name type="scientific">Escherichia coli (strain K12)</name>
    <dbReference type="NCBI Taxonomy" id="83333"/>
    <lineage>
        <taxon>Bacteria</taxon>
        <taxon>Pseudomonadati</taxon>
        <taxon>Pseudomonadota</taxon>
        <taxon>Gammaproteobacteria</taxon>
        <taxon>Enterobacterales</taxon>
        <taxon>Enterobacteriaceae</taxon>
        <taxon>Escherichia</taxon>
    </lineage>
</organism>
<evidence type="ECO:0000255" key="1">
    <source>
        <dbReference type="HAMAP-Rule" id="MF_00190"/>
    </source>
</evidence>
<evidence type="ECO:0000269" key="2">
    <source>
    </source>
</evidence>
<evidence type="ECO:0000269" key="3">
    <source>
    </source>
</evidence>
<evidence type="ECO:0000269" key="4">
    <source>
    </source>
</evidence>
<evidence type="ECO:0000269" key="5">
    <source>
    </source>
</evidence>
<evidence type="ECO:0000269" key="6">
    <source>
    </source>
</evidence>
<evidence type="ECO:0000303" key="7">
    <source>
    </source>
</evidence>
<evidence type="ECO:0000305" key="8">
    <source>
    </source>
</evidence>
<feature type="chain" id="PRO_0000201253" description="Cardiolipin synthase A">
    <location>
        <begin position="1"/>
        <end position="486"/>
    </location>
</feature>
<feature type="transmembrane region" description="Helical" evidence="1">
    <location>
        <begin position="3"/>
        <end position="23"/>
    </location>
</feature>
<feature type="transmembrane region" description="Helical" evidence="1">
    <location>
        <begin position="38"/>
        <end position="58"/>
    </location>
</feature>
<feature type="domain" description="PLD phosphodiesterase 1" evidence="1">
    <location>
        <begin position="219"/>
        <end position="246"/>
    </location>
</feature>
<feature type="domain" description="PLD phosphodiesterase 2" evidence="1">
    <location>
        <begin position="399"/>
        <end position="426"/>
    </location>
</feature>
<feature type="active site" evidence="1">
    <location>
        <position position="224"/>
    </location>
</feature>
<feature type="active site" evidence="1">
    <location>
        <position position="226"/>
    </location>
</feature>
<feature type="active site" evidence="1">
    <location>
        <position position="231"/>
    </location>
</feature>
<feature type="active site" evidence="1">
    <location>
        <position position="404"/>
    </location>
</feature>
<feature type="active site" evidence="1">
    <location>
        <position position="406"/>
    </location>
</feature>
<feature type="active site" evidence="1">
    <location>
        <position position="411"/>
    </location>
</feature>
<feature type="sequence variant" description="In strain: ECOR 60.">
    <original>I</original>
    <variation>S</variation>
    <location>
        <position position="113"/>
    </location>
</feature>
<feature type="sequence variant" description="In strain: ECOR 50.">
    <original>E</original>
    <variation>G</variation>
    <location>
        <position position="283"/>
    </location>
</feature>
<feature type="sequence variant" description="In strain: ECOR 16.">
    <original>G</original>
    <variation>S</variation>
    <location>
        <position position="378"/>
    </location>
</feature>
<feature type="sequence variant" description="In strain: ECOR 46.">
    <original>S</original>
    <variation>R</variation>
    <location>
        <position position="426"/>
    </location>
</feature>
<feature type="mutagenesis site" description="Remains membrane associated and retains in vitro and in vivo activity." evidence="4">
    <location>
        <begin position="2"/>
        <end position="60"/>
    </location>
</feature>
<feature type="mutagenesis site" description="Retains in vitro activity, but loses most of its in vivo activity. Higher apparent molecular mass than wild-type protein." evidence="4">
    <original>LV</original>
    <variation>SS</variation>
    <location>
        <begin position="7"/>
        <end position="8"/>
    </location>
</feature>
<feature type="mutagenesis site" description="Undergoes altered post-translational processing and has much lower in vivo and in vitro activity." evidence="4">
    <original>KRR</original>
    <variation>TTT</variation>
    <location>
        <begin position="30"/>
        <end position="32"/>
    </location>
</feature>
<feature type="mutagenesis site" description="Does not affect CL synthase processing or activity." evidence="4">
    <original>G</original>
    <variation>A</variation>
    <location>
        <position position="59"/>
    </location>
</feature>